<accession>Q7TNJ4</accession>
<accession>Q80ZD6</accession>
<evidence type="ECO:0000255" key="1"/>
<evidence type="ECO:0000255" key="2">
    <source>
        <dbReference type="PROSITE-ProRule" id="PRU00114"/>
    </source>
</evidence>
<evidence type="ECO:0000256" key="3">
    <source>
        <dbReference type="SAM" id="MobiDB-lite"/>
    </source>
</evidence>
<evidence type="ECO:0000269" key="4">
    <source>
    </source>
</evidence>
<evidence type="ECO:0000269" key="5">
    <source>
    </source>
</evidence>
<evidence type="ECO:0000305" key="6"/>
<evidence type="ECO:0000312" key="7">
    <source>
        <dbReference type="EMBL" id="AAO48951.1"/>
    </source>
</evidence>
<evidence type="ECO:0000312" key="8">
    <source>
        <dbReference type="EMBL" id="BAC81186.1"/>
    </source>
</evidence>
<protein>
    <recommendedName>
        <fullName>Amphoterin-induced protein 2</fullName>
    </recommendedName>
    <alternativeName>
        <fullName>AMIGO-2</fullName>
    </alternativeName>
    <alternativeName>
        <fullName>Alivin-1</fullName>
    </alternativeName>
</protein>
<feature type="signal peptide" evidence="1">
    <location>
        <begin position="1"/>
        <end position="37"/>
    </location>
</feature>
<feature type="chain" id="PRO_0000014512" description="Amphoterin-induced protein 2" evidence="1">
    <location>
        <begin position="38"/>
        <end position="520"/>
    </location>
</feature>
<feature type="topological domain" description="Extracellular" evidence="1">
    <location>
        <begin position="38"/>
        <end position="398"/>
    </location>
</feature>
<feature type="transmembrane region" description="Helical" evidence="1">
    <location>
        <begin position="399"/>
        <end position="419"/>
    </location>
</feature>
<feature type="topological domain" description="Cytoplasmic" evidence="1">
    <location>
        <begin position="420"/>
        <end position="520"/>
    </location>
</feature>
<feature type="domain" description="LRRNT">
    <location>
        <begin position="38"/>
        <end position="67"/>
    </location>
</feature>
<feature type="repeat" description="LRR 1">
    <location>
        <begin position="68"/>
        <end position="89"/>
    </location>
</feature>
<feature type="repeat" description="LRR 2">
    <location>
        <begin position="93"/>
        <end position="114"/>
    </location>
</feature>
<feature type="repeat" description="LRR 3">
    <location>
        <begin position="117"/>
        <end position="138"/>
    </location>
</feature>
<feature type="repeat" description="LRR 4">
    <location>
        <begin position="141"/>
        <end position="162"/>
    </location>
</feature>
<feature type="repeat" description="LRR 5">
    <location>
        <begin position="165"/>
        <end position="186"/>
    </location>
</feature>
<feature type="repeat" description="LRR 6">
    <location>
        <begin position="192"/>
        <end position="213"/>
    </location>
</feature>
<feature type="domain" description="LRRCT">
    <location>
        <begin position="227"/>
        <end position="283"/>
    </location>
</feature>
<feature type="domain" description="Ig-like C2-type" evidence="1">
    <location>
        <begin position="288"/>
        <end position="378"/>
    </location>
</feature>
<feature type="region of interest" description="Disordered" evidence="3">
    <location>
        <begin position="437"/>
        <end position="458"/>
    </location>
</feature>
<feature type="region of interest" description="Disordered" evidence="3">
    <location>
        <begin position="498"/>
        <end position="520"/>
    </location>
</feature>
<feature type="glycosylation site" description="N-linked (GlcNAc...) asparagine" evidence="1">
    <location>
        <position position="57"/>
    </location>
</feature>
<feature type="glycosylation site" description="N-linked (GlcNAc...) asparagine" evidence="1">
    <location>
        <position position="103"/>
    </location>
</feature>
<feature type="glycosylation site" description="N-linked (GlcNAc...) asparagine" evidence="1">
    <location>
        <position position="280"/>
    </location>
</feature>
<feature type="glycosylation site" description="N-linked (GlcNAc...) asparagine" evidence="1">
    <location>
        <position position="287"/>
    </location>
</feature>
<feature type="glycosylation site" description="N-linked (GlcNAc...) asparagine" evidence="1">
    <location>
        <position position="344"/>
    </location>
</feature>
<feature type="glycosylation site" description="N-linked (GlcNAc...) asparagine" evidence="1">
    <location>
        <position position="372"/>
    </location>
</feature>
<feature type="glycosylation site" description="N-linked (GlcNAc...) asparagine" evidence="1">
    <location>
        <position position="380"/>
    </location>
</feature>
<feature type="glycosylation site" description="N-linked (GlcNAc...) asparagine" evidence="1">
    <location>
        <position position="383"/>
    </location>
</feature>
<feature type="glycosylation site" description="N-linked (GlcNAc...) asparagine" evidence="1">
    <location>
        <position position="387"/>
    </location>
</feature>
<feature type="disulfide bond" evidence="2">
    <location>
        <begin position="40"/>
        <end position="46"/>
    </location>
</feature>
<feature type="disulfide bond" evidence="2">
    <location>
        <begin position="44"/>
        <end position="53"/>
    </location>
</feature>
<feature type="disulfide bond" evidence="2">
    <location>
        <begin position="231"/>
        <end position="259"/>
    </location>
</feature>
<feature type="disulfide bond" evidence="2">
    <location>
        <begin position="233"/>
        <end position="281"/>
    </location>
</feature>
<feature type="disulfide bond" evidence="2">
    <location>
        <begin position="309"/>
        <end position="362"/>
    </location>
</feature>
<feature type="sequence conflict" description="In Ref. 2; AAO48951." evidence="6" ref="2">
    <original>K</original>
    <variation>E</variation>
    <location>
        <position position="487"/>
    </location>
</feature>
<sequence length="520" mass="57759">MSLRFHTLPTLPRAVKPGCRELLCLLVIAVMVSPSSSGLCPTACICATDIVSCTNKNLSKVPGNLFRLIKRLDLSYNRIGLLDADWIPVSFVKLSTLIVRHNNITSISTGSFSTTPNLKCLDLSSNRLKSVKSAMFQELKVLEVLLLYNNHISYLDPAAFGGLSHLQKLYLSGNFLTKFPMDLYVGRFKLADLTFLDVSYNQIASIPMHHINLVPGKQLRGIFLHGNPFVCDCSLYSLLTFWYRRHFNSVTDFKHDYTCRLWLDSRHSHQLLLLQDSFLNCSHSVINGSFHALGFIHEAQVGERAIVHCDGKTGNGNTDFIWVGPDNRLLEPDKDTGNFRVFYNGSLVIENPGFEDAGVYSCIAMNRQRLLNETVDIMINVSNFTINRSHHAHEAFNTAFTTLAACVVSIVLVLLYLYLTPCPCKCRDKRQKNALNQSNAHSSILSPGPTRDASAEDRKAGKRVVFLEPLKDPAVGQNGKVKLVPSKTVIAEGILKSSRAKSDSDSVNSVFSDTPFVAST</sequence>
<proteinExistence type="evidence at protein level"/>
<comment type="function">
    <text evidence="4 5">Required for depolarization-dependent survival of cultured cerebellar granule neurons. May mediate homophilic as well as heterophilic cell-cell interaction with AMIGO1 or AMIGO3. May contribute to signal transduction through its intracellular domain.</text>
</comment>
<comment type="subunit">
    <text evidence="4">Binds itself as well as AMIGO1 and AMIGO3.</text>
</comment>
<comment type="subcellular location">
    <subcellularLocation>
        <location evidence="6">Cell membrane</location>
        <topology evidence="6">Single-pass type I membrane protein</topology>
    </subcellularLocation>
    <subcellularLocation>
        <location evidence="5">Nucleus</location>
    </subcellularLocation>
    <text>Associated with nucleus as well as plasma membrane. Restricted to somata of cerebellar as well as hippocampal neurons.</text>
</comment>
<comment type="tissue specificity">
    <text evidence="4 5">Highest levels in the lung. High levels in cerebellar granule neurons and Purkinje cells. Also in pyramidal cells between CA1 and CA3 regions of the hippocampus and granule cells of the dentate gyrus.</text>
</comment>
<comment type="developmental stage">
    <text evidence="5">High level expression in cerebellum of newborn rats is down-regulated to 50% by postnatal day 14.</text>
</comment>
<comment type="similarity">
    <text evidence="6">Belongs to the immunoglobulin superfamily. AMIGO family.</text>
</comment>
<gene>
    <name evidence="7" type="primary">Amigo2</name>
    <name evidence="8" type="synonym">Ali1</name>
</gene>
<name>AMGO2_RAT</name>
<organism>
    <name type="scientific">Rattus norvegicus</name>
    <name type="common">Rat</name>
    <dbReference type="NCBI Taxonomy" id="10116"/>
    <lineage>
        <taxon>Eukaryota</taxon>
        <taxon>Metazoa</taxon>
        <taxon>Chordata</taxon>
        <taxon>Craniata</taxon>
        <taxon>Vertebrata</taxon>
        <taxon>Euteleostomi</taxon>
        <taxon>Mammalia</taxon>
        <taxon>Eutheria</taxon>
        <taxon>Euarchontoglires</taxon>
        <taxon>Glires</taxon>
        <taxon>Rodentia</taxon>
        <taxon>Myomorpha</taxon>
        <taxon>Muroidea</taxon>
        <taxon>Muridae</taxon>
        <taxon>Murinae</taxon>
        <taxon>Rattus</taxon>
    </lineage>
</organism>
<dbReference type="EMBL" id="AY237730">
    <property type="protein sequence ID" value="AAO48951.1"/>
    <property type="molecule type" value="mRNA"/>
</dbReference>
<dbReference type="EMBL" id="AB078879">
    <property type="protein sequence ID" value="BAC81186.1"/>
    <property type="molecule type" value="mRNA"/>
</dbReference>
<dbReference type="RefSeq" id="NP_877968.2">
    <property type="nucleotide sequence ID" value="NM_182816.2"/>
</dbReference>
<dbReference type="RefSeq" id="XP_006242352.1">
    <property type="nucleotide sequence ID" value="XM_006242290.2"/>
</dbReference>
<dbReference type="RefSeq" id="XP_017450269.1">
    <property type="nucleotide sequence ID" value="XM_017594780.1"/>
</dbReference>
<dbReference type="RefSeq" id="XP_017450270.1">
    <property type="nucleotide sequence ID" value="XM_017594781.1"/>
</dbReference>
<dbReference type="SMR" id="Q7TNJ4"/>
<dbReference type="FunCoup" id="Q7TNJ4">
    <property type="interactions" value="332"/>
</dbReference>
<dbReference type="STRING" id="10116.ENSRNOP00000009199"/>
<dbReference type="GlyCosmos" id="Q7TNJ4">
    <property type="glycosylation" value="9 sites, No reported glycans"/>
</dbReference>
<dbReference type="GlyGen" id="Q7TNJ4">
    <property type="glycosylation" value="9 sites"/>
</dbReference>
<dbReference type="PhosphoSitePlus" id="Q7TNJ4"/>
<dbReference type="PaxDb" id="10116-ENSRNOP00000009199"/>
<dbReference type="GeneID" id="300186"/>
<dbReference type="KEGG" id="rno:300186"/>
<dbReference type="UCSC" id="RGD:727911">
    <property type="organism name" value="rat"/>
</dbReference>
<dbReference type="AGR" id="RGD:727911"/>
<dbReference type="CTD" id="347902"/>
<dbReference type="RGD" id="727911">
    <property type="gene designation" value="Amigo2"/>
</dbReference>
<dbReference type="eggNOG" id="ENOG502R009">
    <property type="taxonomic scope" value="Eukaryota"/>
</dbReference>
<dbReference type="InParanoid" id="Q7TNJ4"/>
<dbReference type="PhylomeDB" id="Q7TNJ4"/>
<dbReference type="TreeFam" id="TF326838"/>
<dbReference type="Reactome" id="R-RNO-9013149">
    <property type="pathway name" value="RAC1 GTPase cycle"/>
</dbReference>
<dbReference type="PRO" id="PR:Q7TNJ4"/>
<dbReference type="Proteomes" id="UP000002494">
    <property type="component" value="Unplaced"/>
</dbReference>
<dbReference type="GO" id="GO:0016020">
    <property type="term" value="C:membrane"/>
    <property type="evidence" value="ECO:0000318"/>
    <property type="project" value="GO_Central"/>
</dbReference>
<dbReference type="GO" id="GO:0005634">
    <property type="term" value="C:nucleus"/>
    <property type="evidence" value="ECO:0007669"/>
    <property type="project" value="UniProtKB-SubCell"/>
</dbReference>
<dbReference type="GO" id="GO:0005886">
    <property type="term" value="C:plasma membrane"/>
    <property type="evidence" value="ECO:0000303"/>
    <property type="project" value="UniProtKB"/>
</dbReference>
<dbReference type="GO" id="GO:0007420">
    <property type="term" value="P:brain development"/>
    <property type="evidence" value="ECO:0000318"/>
    <property type="project" value="GO_Central"/>
</dbReference>
<dbReference type="GO" id="GO:0021549">
    <property type="term" value="P:cerebellum development"/>
    <property type="evidence" value="ECO:0000270"/>
    <property type="project" value="RGD"/>
</dbReference>
<dbReference type="GO" id="GO:0007157">
    <property type="term" value="P:heterophilic cell-cell adhesion via plasma membrane cell adhesion molecules"/>
    <property type="evidence" value="ECO:0000353"/>
    <property type="project" value="UniProtKB"/>
</dbReference>
<dbReference type="GO" id="GO:0007156">
    <property type="term" value="P:homophilic cell adhesion via plasma membrane adhesion molecules"/>
    <property type="evidence" value="ECO:0000353"/>
    <property type="project" value="UniProtKB"/>
</dbReference>
<dbReference type="GO" id="GO:0043524">
    <property type="term" value="P:negative regulation of neuron apoptotic process"/>
    <property type="evidence" value="ECO:0000315"/>
    <property type="project" value="RGD"/>
</dbReference>
<dbReference type="GO" id="GO:0043069">
    <property type="term" value="P:negative regulation of programmed cell death"/>
    <property type="evidence" value="ECO:0000314"/>
    <property type="project" value="UniProtKB"/>
</dbReference>
<dbReference type="GO" id="GO:0051965">
    <property type="term" value="P:positive regulation of synapse assembly"/>
    <property type="evidence" value="ECO:0000266"/>
    <property type="project" value="RGD"/>
</dbReference>
<dbReference type="FunFam" id="2.60.40.10:FF:001047">
    <property type="entry name" value="amphoterin-induced protein 2 isoform X1"/>
    <property type="match status" value="1"/>
</dbReference>
<dbReference type="FunFam" id="3.80.10.10:FF:000170">
    <property type="entry name" value="amphoterin-induced protein 2 isoform X1"/>
    <property type="match status" value="1"/>
</dbReference>
<dbReference type="Gene3D" id="2.60.40.10">
    <property type="entry name" value="Immunoglobulins"/>
    <property type="match status" value="1"/>
</dbReference>
<dbReference type="Gene3D" id="3.80.10.10">
    <property type="entry name" value="Ribonuclease Inhibitor"/>
    <property type="match status" value="1"/>
</dbReference>
<dbReference type="InterPro" id="IPR031283">
    <property type="entry name" value="AMIGO"/>
</dbReference>
<dbReference type="InterPro" id="IPR007110">
    <property type="entry name" value="Ig-like_dom"/>
</dbReference>
<dbReference type="InterPro" id="IPR036179">
    <property type="entry name" value="Ig-like_dom_sf"/>
</dbReference>
<dbReference type="InterPro" id="IPR013783">
    <property type="entry name" value="Ig-like_fold"/>
</dbReference>
<dbReference type="InterPro" id="IPR003599">
    <property type="entry name" value="Ig_sub"/>
</dbReference>
<dbReference type="InterPro" id="IPR003598">
    <property type="entry name" value="Ig_sub2"/>
</dbReference>
<dbReference type="InterPro" id="IPR013151">
    <property type="entry name" value="Immunoglobulin_dom"/>
</dbReference>
<dbReference type="InterPro" id="IPR001611">
    <property type="entry name" value="Leu-rich_rpt"/>
</dbReference>
<dbReference type="InterPro" id="IPR003591">
    <property type="entry name" value="Leu-rich_rpt_typical-subtyp"/>
</dbReference>
<dbReference type="InterPro" id="IPR032675">
    <property type="entry name" value="LRR_dom_sf"/>
</dbReference>
<dbReference type="PANTHER" id="PTHR24368">
    <property type="entry name" value="AMPHOTERIN-INDUCED PROTEIN"/>
    <property type="match status" value="1"/>
</dbReference>
<dbReference type="PANTHER" id="PTHR24368:SF209">
    <property type="entry name" value="AMPHOTERIN-INDUCED PROTEIN 2"/>
    <property type="match status" value="1"/>
</dbReference>
<dbReference type="Pfam" id="PF00047">
    <property type="entry name" value="ig"/>
    <property type="match status" value="1"/>
</dbReference>
<dbReference type="Pfam" id="PF13855">
    <property type="entry name" value="LRR_8"/>
    <property type="match status" value="1"/>
</dbReference>
<dbReference type="SMART" id="SM00409">
    <property type="entry name" value="IG"/>
    <property type="match status" value="1"/>
</dbReference>
<dbReference type="SMART" id="SM00408">
    <property type="entry name" value="IGc2"/>
    <property type="match status" value="1"/>
</dbReference>
<dbReference type="SMART" id="SM00369">
    <property type="entry name" value="LRR_TYP"/>
    <property type="match status" value="5"/>
</dbReference>
<dbReference type="SUPFAM" id="SSF48726">
    <property type="entry name" value="Immunoglobulin"/>
    <property type="match status" value="1"/>
</dbReference>
<dbReference type="SUPFAM" id="SSF52058">
    <property type="entry name" value="L domain-like"/>
    <property type="match status" value="1"/>
</dbReference>
<dbReference type="PROSITE" id="PS50835">
    <property type="entry name" value="IG_LIKE"/>
    <property type="match status" value="1"/>
</dbReference>
<dbReference type="PROSITE" id="PS51450">
    <property type="entry name" value="LRR"/>
    <property type="match status" value="5"/>
</dbReference>
<keyword id="KW-0130">Cell adhesion</keyword>
<keyword id="KW-1003">Cell membrane</keyword>
<keyword id="KW-1015">Disulfide bond</keyword>
<keyword id="KW-0325">Glycoprotein</keyword>
<keyword id="KW-0393">Immunoglobulin domain</keyword>
<keyword id="KW-0433">Leucine-rich repeat</keyword>
<keyword id="KW-0472">Membrane</keyword>
<keyword id="KW-0539">Nucleus</keyword>
<keyword id="KW-1185">Reference proteome</keyword>
<keyword id="KW-0677">Repeat</keyword>
<keyword id="KW-0732">Signal</keyword>
<keyword id="KW-0812">Transmembrane</keyword>
<keyword id="KW-1133">Transmembrane helix</keyword>
<reference evidence="6 7" key="1">
    <citation type="journal article" date="2003" name="J. Cell Biol.">
        <title>AMIGO, a transmembrane protein implicated in axon tract development, defines a novel protein family with leucine-rich repeats.</title>
        <authorList>
            <person name="Kuja-Panula J."/>
            <person name="Kiiltomaeki M."/>
            <person name="Yamashiro T."/>
            <person name="Rouhiainen A."/>
            <person name="Rauvala H."/>
        </authorList>
    </citation>
    <scope>NUCLEOTIDE SEQUENCE [MRNA]</scope>
    <scope>FUNCTION</scope>
    <scope>TISSUE SPECIFICITY</scope>
    <scope>SUBUNIT</scope>
    <scope>INTERACTION WITH AMIGO1 AND AMIGO3</scope>
    <source>
        <strain evidence="7">Wistar</strain>
    </source>
</reference>
<reference evidence="6 8" key="2">
    <citation type="journal article" date="2003" name="J. Neurosci.">
        <title>Alivin 1, a novel neuronal activity-dependent gene, inhibits apoptosis and promotes survival of cerebellar granule neurons.</title>
        <authorList>
            <person name="Ono T."/>
            <person name="Sekino-Suzuki N."/>
            <person name="Kikkawa Y."/>
            <person name="Yonekawa H."/>
            <person name="Kawashima S."/>
        </authorList>
    </citation>
    <scope>NUCLEOTIDE SEQUENCE [MRNA]</scope>
    <scope>FUNCTION</scope>
    <scope>SUBCELLULAR LOCATION</scope>
    <scope>TISSUE SPECIFICITY</scope>
    <scope>DEVELOPMENTAL STAGE</scope>
    <source>
        <strain evidence="5">Wistar</strain>
        <tissue evidence="5">Cerebellum</tissue>
    </source>
</reference>